<keyword id="KW-0963">Cytoplasm</keyword>
<keyword id="KW-0489">Methyltransferase</keyword>
<keyword id="KW-1185">Reference proteome</keyword>
<keyword id="KW-0698">rRNA processing</keyword>
<keyword id="KW-0949">S-adenosyl-L-methionine</keyword>
<keyword id="KW-0808">Transferase</keyword>
<comment type="function">
    <text evidence="1">Specifically methylates the guanine in position 1207 of 16S rRNA in the 30S particle.</text>
</comment>
<comment type="catalytic activity">
    <reaction evidence="1">
        <text>guanosine(1207) in 16S rRNA + S-adenosyl-L-methionine = N(2)-methylguanosine(1207) in 16S rRNA + S-adenosyl-L-homocysteine + H(+)</text>
        <dbReference type="Rhea" id="RHEA:42736"/>
        <dbReference type="Rhea" id="RHEA-COMP:10213"/>
        <dbReference type="Rhea" id="RHEA-COMP:10214"/>
        <dbReference type="ChEBI" id="CHEBI:15378"/>
        <dbReference type="ChEBI" id="CHEBI:57856"/>
        <dbReference type="ChEBI" id="CHEBI:59789"/>
        <dbReference type="ChEBI" id="CHEBI:74269"/>
        <dbReference type="ChEBI" id="CHEBI:74481"/>
        <dbReference type="EC" id="2.1.1.172"/>
    </reaction>
</comment>
<comment type="subunit">
    <text evidence="1">Monomer.</text>
</comment>
<comment type="subcellular location">
    <subcellularLocation>
        <location evidence="1">Cytoplasm</location>
    </subcellularLocation>
</comment>
<comment type="similarity">
    <text evidence="1">Belongs to the methyltransferase superfamily. RsmC family.</text>
</comment>
<proteinExistence type="inferred from homology"/>
<feature type="chain" id="PRO_0000369749" description="Ribosomal RNA small subunit methyltransferase C">
    <location>
        <begin position="1"/>
        <end position="332"/>
    </location>
</feature>
<organism>
    <name type="scientific">Pseudomonas syringae pv. tomato (strain ATCC BAA-871 / DC3000)</name>
    <dbReference type="NCBI Taxonomy" id="223283"/>
    <lineage>
        <taxon>Bacteria</taxon>
        <taxon>Pseudomonadati</taxon>
        <taxon>Pseudomonadota</taxon>
        <taxon>Gammaproteobacteria</taxon>
        <taxon>Pseudomonadales</taxon>
        <taxon>Pseudomonadaceae</taxon>
        <taxon>Pseudomonas</taxon>
    </lineage>
</organism>
<protein>
    <recommendedName>
        <fullName evidence="1">Ribosomal RNA small subunit methyltransferase C</fullName>
        <ecNumber evidence="1">2.1.1.172</ecNumber>
    </recommendedName>
    <alternativeName>
        <fullName evidence="1">16S rRNA m2G1207 methyltransferase</fullName>
    </alternativeName>
    <alternativeName>
        <fullName evidence="1">rRNA (guanine-N(2)-)-methyltransferase RsmC</fullName>
    </alternativeName>
</protein>
<sequence length="332" mass="35993">MDPRSEVLLRQPELFQGSLLLVGLPADDLLGKLPNARGWCWHAGDQAALDARFEGRVDFGVEAPEATFEAAVLFLPKARDLTDYLLNALASRLAGRELFLVGEKRGGIEAAAKQLSPFGRARKLDSARHCQLWQVTVENAPQAVTLESLARPYQIELQDGPLTVISLPGVFSHGRLDRGSALLLENIDKLPSGNLLDFGCGAGVLGAAVKRRYPHNDVVMLDVDAFATASSRLTLAANGLEAQVVTGDGIDAAPMGLNTILSNPPFHVGVHTDYMATENLLKKARQHLKSGGELRLVANNFLRYQPLIEEHVGYCHVKAQGNGFKIYSAKRS</sequence>
<evidence type="ECO:0000255" key="1">
    <source>
        <dbReference type="HAMAP-Rule" id="MF_01862"/>
    </source>
</evidence>
<gene>
    <name evidence="1" type="primary">rsmC</name>
    <name type="ordered locus">PSPTO_1146</name>
</gene>
<accession>Q887Y4</accession>
<reference key="1">
    <citation type="journal article" date="2003" name="Proc. Natl. Acad. Sci. U.S.A.">
        <title>The complete genome sequence of the Arabidopsis and tomato pathogen Pseudomonas syringae pv. tomato DC3000.</title>
        <authorList>
            <person name="Buell C.R."/>
            <person name="Joardar V."/>
            <person name="Lindeberg M."/>
            <person name="Selengut J."/>
            <person name="Paulsen I.T."/>
            <person name="Gwinn M.L."/>
            <person name="Dodson R.J."/>
            <person name="DeBoy R.T."/>
            <person name="Durkin A.S."/>
            <person name="Kolonay J.F."/>
            <person name="Madupu R."/>
            <person name="Daugherty S.C."/>
            <person name="Brinkac L.M."/>
            <person name="Beanan M.J."/>
            <person name="Haft D.H."/>
            <person name="Nelson W.C."/>
            <person name="Davidsen T.M."/>
            <person name="Zafar N."/>
            <person name="Zhou L."/>
            <person name="Liu J."/>
            <person name="Yuan Q."/>
            <person name="Khouri H.M."/>
            <person name="Fedorova N.B."/>
            <person name="Tran B."/>
            <person name="Russell D."/>
            <person name="Berry K.J."/>
            <person name="Utterback T.R."/>
            <person name="Van Aken S.E."/>
            <person name="Feldblyum T.V."/>
            <person name="D'Ascenzo M."/>
            <person name="Deng W.-L."/>
            <person name="Ramos A.R."/>
            <person name="Alfano J.R."/>
            <person name="Cartinhour S."/>
            <person name="Chatterjee A.K."/>
            <person name="Delaney T.P."/>
            <person name="Lazarowitz S.G."/>
            <person name="Martin G.B."/>
            <person name="Schneider D.J."/>
            <person name="Tang X."/>
            <person name="Bender C.L."/>
            <person name="White O."/>
            <person name="Fraser C.M."/>
            <person name="Collmer A."/>
        </authorList>
    </citation>
    <scope>NUCLEOTIDE SEQUENCE [LARGE SCALE GENOMIC DNA]</scope>
    <source>
        <strain>ATCC BAA-871 / DC3000</strain>
    </source>
</reference>
<dbReference type="EC" id="2.1.1.172" evidence="1"/>
<dbReference type="EMBL" id="AE016853">
    <property type="protein sequence ID" value="AAO54675.1"/>
    <property type="molecule type" value="Genomic_DNA"/>
</dbReference>
<dbReference type="RefSeq" id="NP_790980.1">
    <property type="nucleotide sequence ID" value="NC_004578.1"/>
</dbReference>
<dbReference type="RefSeq" id="WP_005768797.1">
    <property type="nucleotide sequence ID" value="NC_004578.1"/>
</dbReference>
<dbReference type="SMR" id="Q887Y4"/>
<dbReference type="STRING" id="223283.PSPTO_1146"/>
<dbReference type="GeneID" id="1182782"/>
<dbReference type="KEGG" id="pst:PSPTO_1146"/>
<dbReference type="PATRIC" id="fig|223283.9.peg.1158"/>
<dbReference type="eggNOG" id="COG2813">
    <property type="taxonomic scope" value="Bacteria"/>
</dbReference>
<dbReference type="HOGENOM" id="CLU_049581_0_0_6"/>
<dbReference type="OrthoDB" id="9816072at2"/>
<dbReference type="PhylomeDB" id="Q887Y4"/>
<dbReference type="Proteomes" id="UP000002515">
    <property type="component" value="Chromosome"/>
</dbReference>
<dbReference type="GO" id="GO:0005737">
    <property type="term" value="C:cytoplasm"/>
    <property type="evidence" value="ECO:0007669"/>
    <property type="project" value="UniProtKB-SubCell"/>
</dbReference>
<dbReference type="GO" id="GO:0052914">
    <property type="term" value="F:16S rRNA (guanine(1207)-N(2))-methyltransferase activity"/>
    <property type="evidence" value="ECO:0007669"/>
    <property type="project" value="UniProtKB-EC"/>
</dbReference>
<dbReference type="CDD" id="cd02440">
    <property type="entry name" value="AdoMet_MTases"/>
    <property type="match status" value="1"/>
</dbReference>
<dbReference type="FunFam" id="3.40.50.150:FF:000228">
    <property type="entry name" value="Ribosomal RNA small subunit methyltransferase C"/>
    <property type="match status" value="1"/>
</dbReference>
<dbReference type="FunFam" id="3.40.50.150:FF:000233">
    <property type="entry name" value="Ribosomal RNA small subunit methyltransferase C"/>
    <property type="match status" value="1"/>
</dbReference>
<dbReference type="Gene3D" id="3.40.50.150">
    <property type="entry name" value="Vaccinia Virus protein VP39"/>
    <property type="match status" value="2"/>
</dbReference>
<dbReference type="HAMAP" id="MF_01862">
    <property type="entry name" value="16SrRNA_methyltr_C"/>
    <property type="match status" value="1"/>
</dbReference>
<dbReference type="InterPro" id="IPR013675">
    <property type="entry name" value="Mtase_sm_N"/>
</dbReference>
<dbReference type="InterPro" id="IPR023543">
    <property type="entry name" value="rRNA_ssu_MeTfrase_C"/>
</dbReference>
<dbReference type="InterPro" id="IPR046977">
    <property type="entry name" value="RsmC/RlmG"/>
</dbReference>
<dbReference type="InterPro" id="IPR029063">
    <property type="entry name" value="SAM-dependent_MTases_sf"/>
</dbReference>
<dbReference type="InterPro" id="IPR007848">
    <property type="entry name" value="Small_mtfrase_dom"/>
</dbReference>
<dbReference type="PANTHER" id="PTHR47816">
    <property type="entry name" value="RIBOSOMAL RNA SMALL SUBUNIT METHYLTRANSFERASE C"/>
    <property type="match status" value="1"/>
</dbReference>
<dbReference type="PANTHER" id="PTHR47816:SF4">
    <property type="entry name" value="RIBOSOMAL RNA SMALL SUBUNIT METHYLTRANSFERASE C"/>
    <property type="match status" value="1"/>
</dbReference>
<dbReference type="Pfam" id="PF05175">
    <property type="entry name" value="MTS"/>
    <property type="match status" value="1"/>
</dbReference>
<dbReference type="Pfam" id="PF08468">
    <property type="entry name" value="MTS_N"/>
    <property type="match status" value="1"/>
</dbReference>
<dbReference type="SUPFAM" id="SSF53335">
    <property type="entry name" value="S-adenosyl-L-methionine-dependent methyltransferases"/>
    <property type="match status" value="1"/>
</dbReference>
<name>RSMC_PSESM</name>